<sequence>MGLARALRRLSGALEPGNSRAGDEEEAGAGLCRNGWAPGPVAGSRRRGRFVKKDGHCNVRFVNLGGQGARYLSDLFTTCVDVRWRWMCLLFSCSFLASWLLFGLTFWLIASLHGDLAAPPPPAPCFSQVASFLAAFLFALETQTSIGYGVRSVTEECPAAVAAVVLQCIAGCVLDAFVVGAVMAKMAKPKKRNETLVFSENAVVALRDHRLCLMWRVGNLRRSHLVEAHVRAQLLQPRVTPEGEYIPLDHQDVDVGFDGGTDRIFLVSPITIVHEIDSASPLYELGRAELARADFELVVILEGMVEATAMTTQCRSSYLPGELLWGHRFEPVLFQRGSQYEVDYRHFHRTYEVPGTPVCSAKELDERAEQASHSPKSSFPGSLTAFCYENELALSCCQEEDEEEDTKEGTSAETPERAASPQALTPTLALTLPP</sequence>
<keyword id="KW-0407">Ion channel</keyword>
<keyword id="KW-0406">Ion transport</keyword>
<keyword id="KW-0472">Membrane</keyword>
<keyword id="KW-0630">Potassium</keyword>
<keyword id="KW-0633">Potassium transport</keyword>
<keyword id="KW-1185">Reference proteome</keyword>
<keyword id="KW-0702">S-nitrosylation</keyword>
<keyword id="KW-0812">Transmembrane</keyword>
<keyword id="KW-1133">Transmembrane helix</keyword>
<keyword id="KW-0813">Transport</keyword>
<keyword id="KW-0851">Voltage-gated channel</keyword>
<name>KCJ14_MOUSE</name>
<reference key="1">
    <citation type="journal article" date="2005" name="Science">
        <title>The transcriptional landscape of the mammalian genome.</title>
        <authorList>
            <person name="Carninci P."/>
            <person name="Kasukawa T."/>
            <person name="Katayama S."/>
            <person name="Gough J."/>
            <person name="Frith M.C."/>
            <person name="Maeda N."/>
            <person name="Oyama R."/>
            <person name="Ravasi T."/>
            <person name="Lenhard B."/>
            <person name="Wells C."/>
            <person name="Kodzius R."/>
            <person name="Shimokawa K."/>
            <person name="Bajic V.B."/>
            <person name="Brenner S.E."/>
            <person name="Batalov S."/>
            <person name="Forrest A.R."/>
            <person name="Zavolan M."/>
            <person name="Davis M.J."/>
            <person name="Wilming L.G."/>
            <person name="Aidinis V."/>
            <person name="Allen J.E."/>
            <person name="Ambesi-Impiombato A."/>
            <person name="Apweiler R."/>
            <person name="Aturaliya R.N."/>
            <person name="Bailey T.L."/>
            <person name="Bansal M."/>
            <person name="Baxter L."/>
            <person name="Beisel K.W."/>
            <person name="Bersano T."/>
            <person name="Bono H."/>
            <person name="Chalk A.M."/>
            <person name="Chiu K.P."/>
            <person name="Choudhary V."/>
            <person name="Christoffels A."/>
            <person name="Clutterbuck D.R."/>
            <person name="Crowe M.L."/>
            <person name="Dalla E."/>
            <person name="Dalrymple B.P."/>
            <person name="de Bono B."/>
            <person name="Della Gatta G."/>
            <person name="di Bernardo D."/>
            <person name="Down T."/>
            <person name="Engstrom P."/>
            <person name="Fagiolini M."/>
            <person name="Faulkner G."/>
            <person name="Fletcher C.F."/>
            <person name="Fukushima T."/>
            <person name="Furuno M."/>
            <person name="Futaki S."/>
            <person name="Gariboldi M."/>
            <person name="Georgii-Hemming P."/>
            <person name="Gingeras T.R."/>
            <person name="Gojobori T."/>
            <person name="Green R.E."/>
            <person name="Gustincich S."/>
            <person name="Harbers M."/>
            <person name="Hayashi Y."/>
            <person name="Hensch T.K."/>
            <person name="Hirokawa N."/>
            <person name="Hill D."/>
            <person name="Huminiecki L."/>
            <person name="Iacono M."/>
            <person name="Ikeo K."/>
            <person name="Iwama A."/>
            <person name="Ishikawa T."/>
            <person name="Jakt M."/>
            <person name="Kanapin A."/>
            <person name="Katoh M."/>
            <person name="Kawasawa Y."/>
            <person name="Kelso J."/>
            <person name="Kitamura H."/>
            <person name="Kitano H."/>
            <person name="Kollias G."/>
            <person name="Krishnan S.P."/>
            <person name="Kruger A."/>
            <person name="Kummerfeld S.K."/>
            <person name="Kurochkin I.V."/>
            <person name="Lareau L.F."/>
            <person name="Lazarevic D."/>
            <person name="Lipovich L."/>
            <person name="Liu J."/>
            <person name="Liuni S."/>
            <person name="McWilliam S."/>
            <person name="Madan Babu M."/>
            <person name="Madera M."/>
            <person name="Marchionni L."/>
            <person name="Matsuda H."/>
            <person name="Matsuzawa S."/>
            <person name="Miki H."/>
            <person name="Mignone F."/>
            <person name="Miyake S."/>
            <person name="Morris K."/>
            <person name="Mottagui-Tabar S."/>
            <person name="Mulder N."/>
            <person name="Nakano N."/>
            <person name="Nakauchi H."/>
            <person name="Ng P."/>
            <person name="Nilsson R."/>
            <person name="Nishiguchi S."/>
            <person name="Nishikawa S."/>
            <person name="Nori F."/>
            <person name="Ohara O."/>
            <person name="Okazaki Y."/>
            <person name="Orlando V."/>
            <person name="Pang K.C."/>
            <person name="Pavan W.J."/>
            <person name="Pavesi G."/>
            <person name="Pesole G."/>
            <person name="Petrovsky N."/>
            <person name="Piazza S."/>
            <person name="Reed J."/>
            <person name="Reid J.F."/>
            <person name="Ring B.Z."/>
            <person name="Ringwald M."/>
            <person name="Rost B."/>
            <person name="Ruan Y."/>
            <person name="Salzberg S.L."/>
            <person name="Sandelin A."/>
            <person name="Schneider C."/>
            <person name="Schoenbach C."/>
            <person name="Sekiguchi K."/>
            <person name="Semple C.A."/>
            <person name="Seno S."/>
            <person name="Sessa L."/>
            <person name="Sheng Y."/>
            <person name="Shibata Y."/>
            <person name="Shimada H."/>
            <person name="Shimada K."/>
            <person name="Silva D."/>
            <person name="Sinclair B."/>
            <person name="Sperling S."/>
            <person name="Stupka E."/>
            <person name="Sugiura K."/>
            <person name="Sultana R."/>
            <person name="Takenaka Y."/>
            <person name="Taki K."/>
            <person name="Tammoja K."/>
            <person name="Tan S.L."/>
            <person name="Tang S."/>
            <person name="Taylor M.S."/>
            <person name="Tegner J."/>
            <person name="Teichmann S.A."/>
            <person name="Ueda H.R."/>
            <person name="van Nimwegen E."/>
            <person name="Verardo R."/>
            <person name="Wei C.L."/>
            <person name="Yagi K."/>
            <person name="Yamanishi H."/>
            <person name="Zabarovsky E."/>
            <person name="Zhu S."/>
            <person name="Zimmer A."/>
            <person name="Hide W."/>
            <person name="Bult C."/>
            <person name="Grimmond S.M."/>
            <person name="Teasdale R.D."/>
            <person name="Liu E.T."/>
            <person name="Brusic V."/>
            <person name="Quackenbush J."/>
            <person name="Wahlestedt C."/>
            <person name="Mattick J.S."/>
            <person name="Hume D.A."/>
            <person name="Kai C."/>
            <person name="Sasaki D."/>
            <person name="Tomaru Y."/>
            <person name="Fukuda S."/>
            <person name="Kanamori-Katayama M."/>
            <person name="Suzuki M."/>
            <person name="Aoki J."/>
            <person name="Arakawa T."/>
            <person name="Iida J."/>
            <person name="Imamura K."/>
            <person name="Itoh M."/>
            <person name="Kato T."/>
            <person name="Kawaji H."/>
            <person name="Kawagashira N."/>
            <person name="Kawashima T."/>
            <person name="Kojima M."/>
            <person name="Kondo S."/>
            <person name="Konno H."/>
            <person name="Nakano K."/>
            <person name="Ninomiya N."/>
            <person name="Nishio T."/>
            <person name="Okada M."/>
            <person name="Plessy C."/>
            <person name="Shibata K."/>
            <person name="Shiraki T."/>
            <person name="Suzuki S."/>
            <person name="Tagami M."/>
            <person name="Waki K."/>
            <person name="Watahiki A."/>
            <person name="Okamura-Oho Y."/>
            <person name="Suzuki H."/>
            <person name="Kawai J."/>
            <person name="Hayashizaki Y."/>
        </authorList>
    </citation>
    <scope>NUCLEOTIDE SEQUENCE [LARGE SCALE MRNA]</scope>
    <source>
        <strain>C57BL/6J</strain>
        <tissue>Retina</tissue>
    </source>
</reference>
<reference key="2">
    <citation type="journal article" date="2004" name="Genome Res.">
        <title>The status, quality, and expansion of the NIH full-length cDNA project: the Mammalian Gene Collection (MGC).</title>
        <authorList>
            <consortium name="The MGC Project Team"/>
        </authorList>
    </citation>
    <scope>NUCLEOTIDE SEQUENCE [LARGE SCALE MRNA]</scope>
    <source>
        <tissue>Eye</tissue>
    </source>
</reference>
<evidence type="ECO:0000250" key="1">
    <source>
        <dbReference type="UniProtKB" id="F1NHE9"/>
    </source>
</evidence>
<evidence type="ECO:0000250" key="2">
    <source>
        <dbReference type="UniProtKB" id="P63252"/>
    </source>
</evidence>
<evidence type="ECO:0000250" key="3">
    <source>
        <dbReference type="UniProtKB" id="Q9UNX9"/>
    </source>
</evidence>
<evidence type="ECO:0000255" key="4"/>
<evidence type="ECO:0000256" key="5">
    <source>
        <dbReference type="SAM" id="MobiDB-lite"/>
    </source>
</evidence>
<evidence type="ECO:0000305" key="6"/>
<organism>
    <name type="scientific">Mus musculus</name>
    <name type="common">Mouse</name>
    <dbReference type="NCBI Taxonomy" id="10090"/>
    <lineage>
        <taxon>Eukaryota</taxon>
        <taxon>Metazoa</taxon>
        <taxon>Chordata</taxon>
        <taxon>Craniata</taxon>
        <taxon>Vertebrata</taxon>
        <taxon>Euteleostomi</taxon>
        <taxon>Mammalia</taxon>
        <taxon>Eutheria</taxon>
        <taxon>Euarchontoglires</taxon>
        <taxon>Glires</taxon>
        <taxon>Rodentia</taxon>
        <taxon>Myomorpha</taxon>
        <taxon>Muroidea</taxon>
        <taxon>Muridae</taxon>
        <taxon>Murinae</taxon>
        <taxon>Mus</taxon>
        <taxon>Mus</taxon>
    </lineage>
</organism>
<comment type="function">
    <text evidence="3">Inward rectifier potassium channels are characterized by a greater tendency to allow potassium to flow into the cell rather than out of it. Their voltage dependence is regulated by the concentration of extracellular potassium; as external potassium is raised, the voltage range of the channel opening shifts to more positive voltages.</text>
</comment>
<comment type="catalytic activity">
    <reaction evidence="3">
        <text>K(+)(in) = K(+)(out)</text>
        <dbReference type="Rhea" id="RHEA:29463"/>
        <dbReference type="ChEBI" id="CHEBI:29103"/>
    </reaction>
</comment>
<comment type="activity regulation">
    <text evidence="3">Channel activity is regulated by variations of cytosolic pH; channels are activated by alkaline and inhibited by acidic pH values. Inhibited by Ba(2+) and Cs(+) in a voltage-dependent manner; sensitivity to those inhibitors is lower than in other Kir channels.</text>
</comment>
<comment type="subcellular location">
    <subcellularLocation>
        <location evidence="4">Membrane</location>
        <topology evidence="4">Multi-pass membrane protein</topology>
    </subcellularLocation>
</comment>
<comment type="similarity">
    <text evidence="6">Belongs to the inward rectifier-type potassium channel (TC 1.A.2.1) family. KCNJ14 subfamily.</text>
</comment>
<feature type="chain" id="PRO_0000154969" description="ATP-sensitive inward rectifier potassium channel 14">
    <location>
        <begin position="1"/>
        <end position="434"/>
    </location>
</feature>
<feature type="topological domain" description="Cytoplasmic" evidence="1">
    <location>
        <begin position="1"/>
        <end position="81"/>
    </location>
</feature>
<feature type="transmembrane region" description="Helical; Name=M1" evidence="1">
    <location>
        <begin position="82"/>
        <end position="108"/>
    </location>
</feature>
<feature type="topological domain" description="Extracellular" evidence="1">
    <location>
        <begin position="109"/>
        <end position="131"/>
    </location>
</feature>
<feature type="intramembrane region" description="Helical; Pore-forming; Name=H5" evidence="1">
    <location>
        <begin position="132"/>
        <end position="148"/>
    </location>
</feature>
<feature type="topological domain" description="Extracellular" evidence="1">
    <location>
        <begin position="149"/>
        <end position="157"/>
    </location>
</feature>
<feature type="transmembrane region" description="Helical; Name=M2" evidence="1">
    <location>
        <begin position="158"/>
        <end position="185"/>
    </location>
</feature>
<feature type="topological domain" description="Cytoplasmic" evidence="1">
    <location>
        <begin position="186"/>
        <end position="434"/>
    </location>
</feature>
<feature type="region of interest" description="Disordered" evidence="5">
    <location>
        <begin position="398"/>
        <end position="434"/>
    </location>
</feature>
<feature type="short sequence motif" description="Selectivity filter" evidence="1">
    <location>
        <begin position="145"/>
        <end position="150"/>
    </location>
</feature>
<feature type="compositionally biased region" description="Basic and acidic residues" evidence="5">
    <location>
        <begin position="407"/>
        <end position="416"/>
    </location>
</feature>
<feature type="compositionally biased region" description="Low complexity" evidence="5">
    <location>
        <begin position="418"/>
        <end position="434"/>
    </location>
</feature>
<feature type="modified residue" description="S-nitrosocysteine" evidence="2">
    <location>
        <position position="79"/>
    </location>
</feature>
<feature type="sequence conflict" description="In Ref. 1; BAC32051." evidence="6" ref="1">
    <original>C</original>
    <variation>F</variation>
    <location>
        <position position="32"/>
    </location>
</feature>
<feature type="sequence conflict" description="In Ref. 1; BAC27093." evidence="6" ref="1">
    <original>L</original>
    <variation>M</variation>
    <location>
        <position position="297"/>
    </location>
</feature>
<protein>
    <recommendedName>
        <fullName>ATP-sensitive inward rectifier potassium channel 14</fullName>
    </recommendedName>
    <alternativeName>
        <fullName>Inward rectifier K(+) channel Kir2.4</fullName>
        <shortName>IRK-4</shortName>
    </alternativeName>
    <alternativeName>
        <fullName>Potassium channel, inwardly rectifying subfamily J member 14</fullName>
    </alternativeName>
</protein>
<proteinExistence type="evidence at transcript level"/>
<accession>Q8JZN3</accession>
<accession>Q8BMK3</accession>
<accession>Q8BXM0</accession>
<gene>
    <name type="primary">Kcnj14</name>
    <name type="synonym">Irk4</name>
</gene>
<dbReference type="EMBL" id="AK030711">
    <property type="protein sequence ID" value="BAC27093.1"/>
    <property type="molecule type" value="mRNA"/>
</dbReference>
<dbReference type="EMBL" id="AK044725">
    <property type="protein sequence ID" value="BAC32051.1"/>
    <property type="molecule type" value="mRNA"/>
</dbReference>
<dbReference type="EMBL" id="AK080732">
    <property type="protein sequence ID" value="BAC38000.1"/>
    <property type="molecule type" value="mRNA"/>
</dbReference>
<dbReference type="EMBL" id="BC029692">
    <property type="protein sequence ID" value="AAH29692.1"/>
    <property type="molecule type" value="mRNA"/>
</dbReference>
<dbReference type="EMBL" id="BC031753">
    <property type="protein sequence ID" value="AAH31753.1"/>
    <property type="molecule type" value="mRNA"/>
</dbReference>
<dbReference type="CCDS" id="CCDS21265.1"/>
<dbReference type="RefSeq" id="NP_666075.1">
    <property type="nucleotide sequence ID" value="NM_145963.3"/>
</dbReference>
<dbReference type="RefSeq" id="XP_017177583.1">
    <property type="nucleotide sequence ID" value="XM_017322094.1"/>
</dbReference>
<dbReference type="RefSeq" id="XP_036008765.1">
    <property type="nucleotide sequence ID" value="XM_036152872.1"/>
</dbReference>
<dbReference type="SMR" id="Q8JZN3"/>
<dbReference type="FunCoup" id="Q8JZN3">
    <property type="interactions" value="165"/>
</dbReference>
<dbReference type="STRING" id="10090.ENSMUSP00000071829"/>
<dbReference type="PaxDb" id="10090-ENSMUSP00000071829"/>
<dbReference type="ProteomicsDB" id="269187"/>
<dbReference type="ABCD" id="Q8JZN3">
    <property type="antibodies" value="1 sequenced antibody"/>
</dbReference>
<dbReference type="Antibodypedia" id="68399">
    <property type="antibodies" value="20 antibodies from 13 providers"/>
</dbReference>
<dbReference type="DNASU" id="211480"/>
<dbReference type="Ensembl" id="ENSMUST00000071937.7">
    <property type="protein sequence ID" value="ENSMUSP00000071829.6"/>
    <property type="gene ID" value="ENSMUSG00000058743.7"/>
</dbReference>
<dbReference type="GeneID" id="211480"/>
<dbReference type="KEGG" id="mmu:211480"/>
<dbReference type="UCSC" id="uc009gxi.1">
    <property type="organism name" value="mouse"/>
</dbReference>
<dbReference type="AGR" id="MGI:2384820"/>
<dbReference type="CTD" id="3770"/>
<dbReference type="MGI" id="MGI:2384820">
    <property type="gene designation" value="Kcnj14"/>
</dbReference>
<dbReference type="VEuPathDB" id="HostDB:ENSMUSG00000058743"/>
<dbReference type="eggNOG" id="KOG3827">
    <property type="taxonomic scope" value="Eukaryota"/>
</dbReference>
<dbReference type="GeneTree" id="ENSGT01030000234586"/>
<dbReference type="HOGENOM" id="CLU_022738_3_0_1"/>
<dbReference type="InParanoid" id="Q8JZN3"/>
<dbReference type="OMA" id="CHNGWAP"/>
<dbReference type="OrthoDB" id="273257at2759"/>
<dbReference type="PhylomeDB" id="Q8JZN3"/>
<dbReference type="TreeFam" id="TF313676"/>
<dbReference type="Reactome" id="R-MMU-1296053">
    <property type="pathway name" value="Classical Kir channels"/>
</dbReference>
<dbReference type="Reactome" id="R-MMU-5576886">
    <property type="pathway name" value="Phase 4 - resting membrane potential"/>
</dbReference>
<dbReference type="BioGRID-ORCS" id="211480">
    <property type="hits" value="1 hit in 77 CRISPR screens"/>
</dbReference>
<dbReference type="ChiTaRS" id="Kcnj14">
    <property type="organism name" value="mouse"/>
</dbReference>
<dbReference type="PRO" id="PR:Q8JZN3"/>
<dbReference type="Proteomes" id="UP000000589">
    <property type="component" value="Chromosome 7"/>
</dbReference>
<dbReference type="RNAct" id="Q8JZN3">
    <property type="molecule type" value="protein"/>
</dbReference>
<dbReference type="Bgee" id="ENSMUSG00000058743">
    <property type="expression patterns" value="Expressed in layer of retina and 78 other cell types or tissues"/>
</dbReference>
<dbReference type="ExpressionAtlas" id="Q8JZN3">
    <property type="expression patterns" value="baseline and differential"/>
</dbReference>
<dbReference type="GO" id="GO:0034702">
    <property type="term" value="C:monoatomic ion channel complex"/>
    <property type="evidence" value="ECO:0007669"/>
    <property type="project" value="UniProtKB-KW"/>
</dbReference>
<dbReference type="GO" id="GO:0005242">
    <property type="term" value="F:inward rectifier potassium channel activity"/>
    <property type="evidence" value="ECO:0007669"/>
    <property type="project" value="InterPro"/>
</dbReference>
<dbReference type="FunFam" id="1.10.287.70:FF:000063">
    <property type="entry name" value="ATP-sensitive inward rectifier potassium channel 14"/>
    <property type="match status" value="1"/>
</dbReference>
<dbReference type="FunFam" id="2.60.40.1400:FF:000001">
    <property type="entry name" value="G protein-activated inward rectifier potassium channel 2"/>
    <property type="match status" value="1"/>
</dbReference>
<dbReference type="Gene3D" id="1.10.287.70">
    <property type="match status" value="1"/>
</dbReference>
<dbReference type="Gene3D" id="2.60.40.1400">
    <property type="entry name" value="G protein-activated inward rectifier potassium channel 1"/>
    <property type="match status" value="1"/>
</dbReference>
<dbReference type="InterPro" id="IPR014756">
    <property type="entry name" value="Ig_E-set"/>
</dbReference>
<dbReference type="InterPro" id="IPR041647">
    <property type="entry name" value="IRK_C"/>
</dbReference>
<dbReference type="InterPro" id="IPR016449">
    <property type="entry name" value="K_chnl_inward-rec_Kir"/>
</dbReference>
<dbReference type="InterPro" id="IPR013518">
    <property type="entry name" value="K_chnl_inward-rec_Kir_cyto"/>
</dbReference>
<dbReference type="InterPro" id="IPR040445">
    <property type="entry name" value="Kir_TM"/>
</dbReference>
<dbReference type="PANTHER" id="PTHR11767:SF40">
    <property type="entry name" value="ATP-SENSITIVE INWARD RECTIFIER POTASSIUM CHANNEL 14"/>
    <property type="match status" value="1"/>
</dbReference>
<dbReference type="PANTHER" id="PTHR11767">
    <property type="entry name" value="INWARD RECTIFIER POTASSIUM CHANNEL"/>
    <property type="match status" value="1"/>
</dbReference>
<dbReference type="Pfam" id="PF01007">
    <property type="entry name" value="IRK"/>
    <property type="match status" value="1"/>
</dbReference>
<dbReference type="Pfam" id="PF17655">
    <property type="entry name" value="IRK_C"/>
    <property type="match status" value="1"/>
</dbReference>
<dbReference type="PIRSF" id="PIRSF005465">
    <property type="entry name" value="GIRK_kir"/>
    <property type="match status" value="1"/>
</dbReference>
<dbReference type="PRINTS" id="PR01320">
    <property type="entry name" value="KIRCHANNEL"/>
</dbReference>
<dbReference type="SUPFAM" id="SSF81296">
    <property type="entry name" value="E set domains"/>
    <property type="match status" value="1"/>
</dbReference>
<dbReference type="SUPFAM" id="SSF81324">
    <property type="entry name" value="Voltage-gated potassium channels"/>
    <property type="match status" value="1"/>
</dbReference>